<comment type="function">
    <text evidence="1">Catalyzes the acyloin condensation reaction between C atoms 2 and 3 of pyruvate and glyceraldehyde 3-phosphate to yield 1-deoxy-D-xylulose-5-phosphate (DXP).</text>
</comment>
<comment type="catalytic activity">
    <reaction evidence="1">
        <text>D-glyceraldehyde 3-phosphate + pyruvate + H(+) = 1-deoxy-D-xylulose 5-phosphate + CO2</text>
        <dbReference type="Rhea" id="RHEA:12605"/>
        <dbReference type="ChEBI" id="CHEBI:15361"/>
        <dbReference type="ChEBI" id="CHEBI:15378"/>
        <dbReference type="ChEBI" id="CHEBI:16526"/>
        <dbReference type="ChEBI" id="CHEBI:57792"/>
        <dbReference type="ChEBI" id="CHEBI:59776"/>
        <dbReference type="EC" id="2.2.1.7"/>
    </reaction>
</comment>
<comment type="cofactor">
    <cofactor evidence="1">
        <name>Mg(2+)</name>
        <dbReference type="ChEBI" id="CHEBI:18420"/>
    </cofactor>
    <text evidence="1">Binds 1 Mg(2+) ion per subunit.</text>
</comment>
<comment type="cofactor">
    <cofactor evidence="1">
        <name>thiamine diphosphate</name>
        <dbReference type="ChEBI" id="CHEBI:58937"/>
    </cofactor>
    <text evidence="1">Binds 1 thiamine pyrophosphate per subunit.</text>
</comment>
<comment type="pathway">
    <text evidence="1">Metabolic intermediate biosynthesis; 1-deoxy-D-xylulose 5-phosphate biosynthesis; 1-deoxy-D-xylulose 5-phosphate from D-glyceraldehyde 3-phosphate and pyruvate: step 1/1.</text>
</comment>
<comment type="subunit">
    <text evidence="1">Homodimer.</text>
</comment>
<comment type="similarity">
    <text evidence="1">Belongs to the transketolase family. DXPS subfamily.</text>
</comment>
<sequence length="623" mass="68720">MSMQIKRYPTLDLADNPIKLRLLPKESLLTLCDELRQFLLTSVSGSSGHFASGLGTVELTVALHYVYNTPFDNVIWDVGHQAYPHKILTGRRECIATIRQRNGLHPFPWREESEYDILSVGHSSTSISAGLGMAVAATYEGIGRKTVCVIGDGAMTAGMAFEALNHAGDIKSDLLVILNDNKMSISRNVGALNNHLAQILSGKLYLRINESSKKALHGMPYLKELAKRTKEQIKNIIVPNCTLFEELGFNYIGPVDGHDVQGMVHILKNMRCMKGPQLLHIITQKGRGYAPAEKDPTTWHAVPKFDPAIGQLPYQNISNYPTYSDVFGDWLCNAATSNKKLIAITPAMREGSGMAKFANQFPQQYFDVAIAEQHAVTFAAGLAISGYKPVVAIYSTFLQRAYDQVIHDVAIQKLPVLFAIDRGGVVGADGQTHQGAFDLSYLRCVPNMVIMTPSDENECRLMLHTGYHYNNGPSAVRYPRGNGIGVEYSLLRILPLGKAIVCRQGTKIAILNFGTLLTQAKKVAKTFDATLVDMRFVKPLDIELINQLAISHQALVTLEENAVIGGAGSGVNEYLMRQRLLVPVLNIGLPDYFIPQGSQEEIRAELKLDSDGIMEQIKQWLAR</sequence>
<feature type="chain" id="PRO_0000256382" description="1-deoxy-D-xylulose-5-phosphate synthase">
    <location>
        <begin position="1"/>
        <end position="623"/>
    </location>
</feature>
<feature type="binding site" evidence="1">
    <location>
        <position position="80"/>
    </location>
    <ligand>
        <name>thiamine diphosphate</name>
        <dbReference type="ChEBI" id="CHEBI:58937"/>
    </ligand>
</feature>
<feature type="binding site" evidence="1">
    <location>
        <begin position="121"/>
        <end position="123"/>
    </location>
    <ligand>
        <name>thiamine diphosphate</name>
        <dbReference type="ChEBI" id="CHEBI:58937"/>
    </ligand>
</feature>
<feature type="binding site" evidence="1">
    <location>
        <position position="152"/>
    </location>
    <ligand>
        <name>Mg(2+)</name>
        <dbReference type="ChEBI" id="CHEBI:18420"/>
    </ligand>
</feature>
<feature type="binding site" evidence="1">
    <location>
        <begin position="153"/>
        <end position="154"/>
    </location>
    <ligand>
        <name>thiamine diphosphate</name>
        <dbReference type="ChEBI" id="CHEBI:58937"/>
    </ligand>
</feature>
<feature type="binding site" evidence="1">
    <location>
        <position position="181"/>
    </location>
    <ligand>
        <name>Mg(2+)</name>
        <dbReference type="ChEBI" id="CHEBI:18420"/>
    </ligand>
</feature>
<feature type="binding site" evidence="1">
    <location>
        <position position="181"/>
    </location>
    <ligand>
        <name>thiamine diphosphate</name>
        <dbReference type="ChEBI" id="CHEBI:58937"/>
    </ligand>
</feature>
<feature type="binding site" evidence="1">
    <location>
        <position position="289"/>
    </location>
    <ligand>
        <name>thiamine diphosphate</name>
        <dbReference type="ChEBI" id="CHEBI:58937"/>
    </ligand>
</feature>
<feature type="binding site" evidence="1">
    <location>
        <position position="372"/>
    </location>
    <ligand>
        <name>thiamine diphosphate</name>
        <dbReference type="ChEBI" id="CHEBI:58937"/>
    </ligand>
</feature>
<reference key="1">
    <citation type="journal article" date="2006" name="PLoS Biol.">
        <title>Metabolic complementarity and genomics of the dual bacterial symbiosis of sharpshooters.</title>
        <authorList>
            <person name="Wu D."/>
            <person name="Daugherty S.C."/>
            <person name="Van Aken S.E."/>
            <person name="Pai G.H."/>
            <person name="Watkins K.L."/>
            <person name="Khouri H."/>
            <person name="Tallon L.J."/>
            <person name="Zaborsky J.M."/>
            <person name="Dunbar H.E."/>
            <person name="Tran P.L."/>
            <person name="Moran N.A."/>
            <person name="Eisen J.A."/>
        </authorList>
    </citation>
    <scope>NUCLEOTIDE SEQUENCE [LARGE SCALE GENOMIC DNA]</scope>
</reference>
<protein>
    <recommendedName>
        <fullName evidence="1">1-deoxy-D-xylulose-5-phosphate synthase</fullName>
        <ecNumber evidence="1">2.2.1.7</ecNumber>
    </recommendedName>
    <alternativeName>
        <fullName evidence="1">1-deoxyxylulose-5-phosphate synthase</fullName>
        <shortName evidence="1">DXP synthase</shortName>
        <shortName evidence="1">DXPS</shortName>
    </alternativeName>
</protein>
<accession>Q1LTI9</accession>
<name>DXS_BAUCH</name>
<evidence type="ECO:0000255" key="1">
    <source>
        <dbReference type="HAMAP-Rule" id="MF_00315"/>
    </source>
</evidence>
<dbReference type="EC" id="2.2.1.7" evidence="1"/>
<dbReference type="EMBL" id="CP000238">
    <property type="protein sequence ID" value="ABF13902.1"/>
    <property type="molecule type" value="Genomic_DNA"/>
</dbReference>
<dbReference type="RefSeq" id="WP_011520458.1">
    <property type="nucleotide sequence ID" value="NC_007984.1"/>
</dbReference>
<dbReference type="SMR" id="Q1LTI9"/>
<dbReference type="STRING" id="374463.BCI_0275"/>
<dbReference type="KEGG" id="bci:BCI_0275"/>
<dbReference type="HOGENOM" id="CLU_009227_1_4_6"/>
<dbReference type="OrthoDB" id="9803371at2"/>
<dbReference type="UniPathway" id="UPA00064">
    <property type="reaction ID" value="UER00091"/>
</dbReference>
<dbReference type="Proteomes" id="UP000002427">
    <property type="component" value="Chromosome"/>
</dbReference>
<dbReference type="GO" id="GO:0005829">
    <property type="term" value="C:cytosol"/>
    <property type="evidence" value="ECO:0007669"/>
    <property type="project" value="TreeGrafter"/>
</dbReference>
<dbReference type="GO" id="GO:0008661">
    <property type="term" value="F:1-deoxy-D-xylulose-5-phosphate synthase activity"/>
    <property type="evidence" value="ECO:0007669"/>
    <property type="project" value="UniProtKB-UniRule"/>
</dbReference>
<dbReference type="GO" id="GO:0000287">
    <property type="term" value="F:magnesium ion binding"/>
    <property type="evidence" value="ECO:0007669"/>
    <property type="project" value="UniProtKB-UniRule"/>
</dbReference>
<dbReference type="GO" id="GO:0030976">
    <property type="term" value="F:thiamine pyrophosphate binding"/>
    <property type="evidence" value="ECO:0007669"/>
    <property type="project" value="UniProtKB-UniRule"/>
</dbReference>
<dbReference type="GO" id="GO:0052865">
    <property type="term" value="P:1-deoxy-D-xylulose 5-phosphate biosynthetic process"/>
    <property type="evidence" value="ECO:0007669"/>
    <property type="project" value="UniProtKB-UniPathway"/>
</dbReference>
<dbReference type="GO" id="GO:0019288">
    <property type="term" value="P:isopentenyl diphosphate biosynthetic process, methylerythritol 4-phosphate pathway"/>
    <property type="evidence" value="ECO:0007669"/>
    <property type="project" value="TreeGrafter"/>
</dbReference>
<dbReference type="GO" id="GO:0016114">
    <property type="term" value="P:terpenoid biosynthetic process"/>
    <property type="evidence" value="ECO:0007669"/>
    <property type="project" value="UniProtKB-UniRule"/>
</dbReference>
<dbReference type="GO" id="GO:0009228">
    <property type="term" value="P:thiamine biosynthetic process"/>
    <property type="evidence" value="ECO:0007669"/>
    <property type="project" value="UniProtKB-UniRule"/>
</dbReference>
<dbReference type="CDD" id="cd02007">
    <property type="entry name" value="TPP_DXS"/>
    <property type="match status" value="1"/>
</dbReference>
<dbReference type="CDD" id="cd07033">
    <property type="entry name" value="TPP_PYR_DXS_TK_like"/>
    <property type="match status" value="1"/>
</dbReference>
<dbReference type="FunFam" id="3.40.50.920:FF:000002">
    <property type="entry name" value="1-deoxy-D-xylulose-5-phosphate synthase"/>
    <property type="match status" value="1"/>
</dbReference>
<dbReference type="FunFam" id="3.40.50.970:FF:000005">
    <property type="entry name" value="1-deoxy-D-xylulose-5-phosphate synthase"/>
    <property type="match status" value="1"/>
</dbReference>
<dbReference type="Gene3D" id="3.40.50.920">
    <property type="match status" value="1"/>
</dbReference>
<dbReference type="Gene3D" id="3.40.50.970">
    <property type="match status" value="2"/>
</dbReference>
<dbReference type="HAMAP" id="MF_00315">
    <property type="entry name" value="DXP_synth"/>
    <property type="match status" value="1"/>
</dbReference>
<dbReference type="InterPro" id="IPR005477">
    <property type="entry name" value="Dxylulose-5-P_synthase"/>
</dbReference>
<dbReference type="InterPro" id="IPR029061">
    <property type="entry name" value="THDP-binding"/>
</dbReference>
<dbReference type="InterPro" id="IPR009014">
    <property type="entry name" value="Transketo_C/PFOR_II"/>
</dbReference>
<dbReference type="InterPro" id="IPR005475">
    <property type="entry name" value="Transketolase-like_Pyr-bd"/>
</dbReference>
<dbReference type="InterPro" id="IPR020826">
    <property type="entry name" value="Transketolase_BS"/>
</dbReference>
<dbReference type="InterPro" id="IPR033248">
    <property type="entry name" value="Transketolase_C"/>
</dbReference>
<dbReference type="InterPro" id="IPR049557">
    <property type="entry name" value="Transketolase_CS"/>
</dbReference>
<dbReference type="NCBIfam" id="TIGR00204">
    <property type="entry name" value="dxs"/>
    <property type="match status" value="1"/>
</dbReference>
<dbReference type="NCBIfam" id="NF003933">
    <property type="entry name" value="PRK05444.2-2"/>
    <property type="match status" value="1"/>
</dbReference>
<dbReference type="PANTHER" id="PTHR43322">
    <property type="entry name" value="1-D-DEOXYXYLULOSE 5-PHOSPHATE SYNTHASE-RELATED"/>
    <property type="match status" value="1"/>
</dbReference>
<dbReference type="PANTHER" id="PTHR43322:SF5">
    <property type="entry name" value="1-DEOXY-D-XYLULOSE-5-PHOSPHATE SYNTHASE, CHLOROPLASTIC"/>
    <property type="match status" value="1"/>
</dbReference>
<dbReference type="Pfam" id="PF13292">
    <property type="entry name" value="DXP_synthase_N"/>
    <property type="match status" value="1"/>
</dbReference>
<dbReference type="Pfam" id="PF02779">
    <property type="entry name" value="Transket_pyr"/>
    <property type="match status" value="1"/>
</dbReference>
<dbReference type="Pfam" id="PF02780">
    <property type="entry name" value="Transketolase_C"/>
    <property type="match status" value="1"/>
</dbReference>
<dbReference type="SMART" id="SM00861">
    <property type="entry name" value="Transket_pyr"/>
    <property type="match status" value="1"/>
</dbReference>
<dbReference type="SUPFAM" id="SSF52518">
    <property type="entry name" value="Thiamin diphosphate-binding fold (THDP-binding)"/>
    <property type="match status" value="2"/>
</dbReference>
<dbReference type="SUPFAM" id="SSF52922">
    <property type="entry name" value="TK C-terminal domain-like"/>
    <property type="match status" value="1"/>
</dbReference>
<dbReference type="PROSITE" id="PS00801">
    <property type="entry name" value="TRANSKETOLASE_1"/>
    <property type="match status" value="1"/>
</dbReference>
<dbReference type="PROSITE" id="PS00802">
    <property type="entry name" value="TRANSKETOLASE_2"/>
    <property type="match status" value="1"/>
</dbReference>
<keyword id="KW-0414">Isoprene biosynthesis</keyword>
<keyword id="KW-0460">Magnesium</keyword>
<keyword id="KW-0479">Metal-binding</keyword>
<keyword id="KW-1185">Reference proteome</keyword>
<keyword id="KW-0784">Thiamine biosynthesis</keyword>
<keyword id="KW-0786">Thiamine pyrophosphate</keyword>
<keyword id="KW-0808">Transferase</keyword>
<proteinExistence type="inferred from homology"/>
<organism>
    <name type="scientific">Baumannia cicadellinicola subsp. Homalodisca coagulata</name>
    <dbReference type="NCBI Taxonomy" id="374463"/>
    <lineage>
        <taxon>Bacteria</taxon>
        <taxon>Pseudomonadati</taxon>
        <taxon>Pseudomonadota</taxon>
        <taxon>Gammaproteobacteria</taxon>
        <taxon>Candidatus Palibaumannia</taxon>
    </lineage>
</organism>
<gene>
    <name evidence="1" type="primary">dxs</name>
    <name type="ordered locus">BCI_0275</name>
</gene>